<keyword id="KW-1003">Cell membrane</keyword>
<keyword id="KW-0256">Endoplasmic reticulum</keyword>
<keyword id="KW-0433">Leucine-rich repeat</keyword>
<keyword id="KW-0472">Membrane</keyword>
<keyword id="KW-0496">Mitochondrion</keyword>
<keyword id="KW-1185">Reference proteome</keyword>
<keyword id="KW-0677">Repeat</keyword>
<keyword id="KW-0732">Signal</keyword>
<keyword id="KW-0809">Transit peptide</keyword>
<sequence>MMFPINVLLYKWLIFAVTFLWSCKILLRKLLGINITWINLFKLEICGLSLEDGTVRLKSVRFAVFERKLFIKGLRIDSKKSSTNDLHKELPREEERTFIETPEDNGGGFISKILSLSQYWLNGVTIILEDTQLVNNDITIEKFGFFLSIDNSKHIKSLRFDSFLRKLLWNGQTIIADAIFIVNTNLLIGEIMNPLKDGLQVGLDLKLGDLNIPMNLLNLFINKENVDLMSNEKLLQRLADTTKANEELKDEDIAKMKDDLVYAMEKFVDRIKPLKEMNVTVDKLQIKDFPLTNHPELLGMNKYISYNVLVSNINFNTNRFRNEMPGYTLIFEERDSPFKFSIIMARFNIYLNLNRKHQSHAKQLKIIEIPNVSIFGETNLFSQKFRLSNNLHAKELENAIFNIKGNISSLTIDMDPVNISFIKCFLSNIKVFTSSCPKNKILKENSHVKFLTRRRVLFDYFKCFLPLINMKFTLDDPKFVINDKDDLIIGKFSVFMISHHSKRYTLGNNLMEEKEETQHIFYESHWNVELLDMKLQHIIKHQKYEHTILRVDSIAIEEKVQLLPDILCSANADIDTLMLDLSELPTMVMLSELVHNLDSQLANVEENYFKEFYEKFASNLQNMKAECSNMAKCLRQKEILPSDFMFQQLPDFFDYIKINIRDISSTLGARSVFMPRDVFSSVDSQSSKDLIDGKLRKYCNTVEKLQIALFGDKTQWHNKIGSNHATMVRSGQLTNFSKDNKQNPNHKSSIADLDDISTSDATEVNHLWNINLLVNDITTSIIGETPEVSEELSTKTVSKVSNLSIKLFPDTESFSSNESDSKIILQINHSRGTSVVSLMSIFLAVSGIHTLNQIFGHCIHQKMRQSKTKQYFLALSESKKKSCIKSIKWGQLKELLEINFSSEYISQIIALPNGLRTKFEPTSTFITVKNCNTISVSGQYFRMMVESPTQPNFWERMICINGFKVMIHIDLLKQQMKKLNSLQNWEKLPSAITLENDSWHFSIPHHFEMFKIIDSIPTIFKSIKQMLYSLKTSKDDLIIFPHKIETPLSLPKIKLKSKRWLFSISDDPLEAELNTIFQIGLQEQRERLAKLQEFNKRISEDLIKSQKNAKEMKDDFEAIDNAILKHRTGLWAKDGKKRLRKSATDSEIPLTPAALNINGKRDDRPDRTQFISPEIENAYNTLLANFSDSWIKRVKEYKVKERREFDKNFSFLWGFIDYTKLPKDINKKVLPFSTNPFLMNLIIENIDIDIIRPSCGIENIPNFIHDVGKGVPKNTEYSIMIPMHLDAKFSEVRWHLRDYPLPFVSIPPLSSTQSKETIPMRIYGDFMITEDMLQSDRELRTLFVPLIPSVTVENTDRYYSLFVPRTMTSAKIFTDLNFEINSNHTTRVTWGGSYQPAIQQTMQCLDNFSKPPLDPSVKLGFWDKTRYLFHGKINIVWKKRGKFEISLKGAKSPYMLGGESAGFIVGFDGNVNLKCNEDNDPKKFLSCSADKVHFSIPNYFAKPLLVWSRPSTNTMFIPNQDDTNMQRYASFYYLLNTTSSKNEKADKEIMGKSFIEKTGIKLSGGMTLDMGILFERLGPSLNERTFESKKHYLTRLCNPIYVQDLSKHDSYAGFRSDFIHMSFGLSSNSNSAYNAMQLSPNGFKAFFVWWKSFSGNFPVRRGPLFGLQSISPKFGEHLYTISYHADVSPLFINYMYHNADADQILRKNYLEVAEFAGLKAKSSHFIMDLHQRKEVLTEYQAGLNVRRRVMKLKFLAGDVVCQDVDIRTVSGEFSKLNYIEEKEDAEYDIFDNDMSWLDITDFQDAFFINPDNYLPKIKIMPFAFSPQFAYQKRASYGDKYQVDPKTCKPITPFDNRVSHGCTLGHNVSLRTDLVEKRVTVLKKFREKLQEGIRKNKSAGVSEENLNDLLSKANSSVENAELLLKDFQKIFKQHEAGQTEQPFHFDSLNLLKNTKKTLKQFEHRFFIFNVLLKWNEDARSAIFKFFYYANLSNEFASLASGKGLREFEDVIKQREMTDDTTSMEAIPEGTDKANTTKQCHSCDDTEFTTENLLNIFEKNITQLSCDIKNKIHHKFFVQFITPQIQLTSLENPEACVLVSSPFFMLKTLEFDANTTSNTYMQDIFLKRHGILFGNANAFLFNKKDYQEFFELYFGSSSYGQDKKEQWPPWLGLELGFEPSALKKKAVVRNISALLHHQKLAPFSAKYDSLKDKIEDNICGYVPQVNVQVNSDEYLMLTKMALKLFLYVEPEDEELKKYIEKLIIGYDIYDTAQTRKFVNDLHDSEQILAVVEKELLFKRSLLDDIGKLDLSNIHNERMHQLLRLYILRKVFTSNGNNYINRTLVWNIKVNETILHLLDKIDKPFLDIAVAKLNFQRIQHTMGLRKNTVTVKMMQIFDLGENVNYHCILGPLITSSGNDTVGLASDVPLVQITWDVDKPVGGIKVVKNVETTLSSLTIKLEEDRLNKLFEWLSLKELIYDGNGDDDDGASSIFDMVSSESEEGKIEFSEDISSDFNEMLKRSSDYMIVEDLKLNSFKLCISYKGKGKMRLANVTNFVFNFPTLRLSNQTLRVTDLLLALKKVLIKVLIKHTGRFIGNKLKRNSKENKIADDTSPLKQLTTYNSYTEPEELR</sequence>
<gene>
    <name evidence="10" type="primary">FMP27</name>
    <name evidence="6" type="synonym">HOB1</name>
    <name type="ordered locus">YLR454W</name>
</gene>
<proteinExistence type="evidence at protein level"/>
<reference key="1">
    <citation type="journal article" date="1997" name="Nature">
        <title>The nucleotide sequence of Saccharomyces cerevisiae chromosome XII.</title>
        <authorList>
            <person name="Johnston M."/>
            <person name="Hillier L.W."/>
            <person name="Riles L."/>
            <person name="Albermann K."/>
            <person name="Andre B."/>
            <person name="Ansorge W."/>
            <person name="Benes V."/>
            <person name="Brueckner M."/>
            <person name="Delius H."/>
            <person name="Dubois E."/>
            <person name="Duesterhoeft A."/>
            <person name="Entian K.-D."/>
            <person name="Floeth M."/>
            <person name="Goffeau A."/>
            <person name="Hebling U."/>
            <person name="Heumann K."/>
            <person name="Heuss-Neitzel D."/>
            <person name="Hilbert H."/>
            <person name="Hilger F."/>
            <person name="Kleine K."/>
            <person name="Koetter P."/>
            <person name="Louis E.J."/>
            <person name="Messenguy F."/>
            <person name="Mewes H.-W."/>
            <person name="Miosga T."/>
            <person name="Moestl D."/>
            <person name="Mueller-Auer S."/>
            <person name="Nentwich U."/>
            <person name="Obermaier B."/>
            <person name="Piravandi E."/>
            <person name="Pohl T.M."/>
            <person name="Portetelle D."/>
            <person name="Purnelle B."/>
            <person name="Rechmann S."/>
            <person name="Rieger M."/>
            <person name="Rinke M."/>
            <person name="Rose M."/>
            <person name="Scharfe M."/>
            <person name="Scherens B."/>
            <person name="Scholler P."/>
            <person name="Schwager C."/>
            <person name="Schwarz S."/>
            <person name="Underwood A.P."/>
            <person name="Urrestarazu L.A."/>
            <person name="Vandenbol M."/>
            <person name="Verhasselt P."/>
            <person name="Vierendeels F."/>
            <person name="Voet M."/>
            <person name="Volckaert G."/>
            <person name="Voss H."/>
            <person name="Wambutt R."/>
            <person name="Wedler E."/>
            <person name="Wedler H."/>
            <person name="Zimmermann F.K."/>
            <person name="Zollner A."/>
            <person name="Hani J."/>
            <person name="Hoheisel J.D."/>
        </authorList>
    </citation>
    <scope>NUCLEOTIDE SEQUENCE [LARGE SCALE GENOMIC DNA]</scope>
    <source>
        <strain>ATCC 204508 / S288c</strain>
    </source>
</reference>
<reference key="2">
    <citation type="journal article" date="2014" name="G3 (Bethesda)">
        <title>The reference genome sequence of Saccharomyces cerevisiae: Then and now.</title>
        <authorList>
            <person name="Engel S.R."/>
            <person name="Dietrich F.S."/>
            <person name="Fisk D.G."/>
            <person name="Binkley G."/>
            <person name="Balakrishnan R."/>
            <person name="Costanzo M.C."/>
            <person name="Dwight S.S."/>
            <person name="Hitz B.C."/>
            <person name="Karra K."/>
            <person name="Nash R.S."/>
            <person name="Weng S."/>
            <person name="Wong E.D."/>
            <person name="Lloyd P."/>
            <person name="Skrzypek M.S."/>
            <person name="Miyasato S.R."/>
            <person name="Simison M."/>
            <person name="Cherry J.M."/>
        </authorList>
    </citation>
    <scope>GENOME REANNOTATION</scope>
    <source>
        <strain>ATCC 204508 / S288c</strain>
    </source>
</reference>
<reference key="3">
    <citation type="journal article" date="2003" name="Nature">
        <title>Global analysis of protein expression in yeast.</title>
        <authorList>
            <person name="Ghaemmaghami S."/>
            <person name="Huh W.-K."/>
            <person name="Bower K."/>
            <person name="Howson R.W."/>
            <person name="Belle A."/>
            <person name="Dephoure N."/>
            <person name="O'Shea E.K."/>
            <person name="Weissman J.S."/>
        </authorList>
    </citation>
    <scope>LEVEL OF PROTEIN EXPRESSION [LARGE SCALE ANALYSIS]</scope>
</reference>
<reference key="4">
    <citation type="journal article" date="2003" name="Proc. Natl. Acad. Sci. U.S.A.">
        <title>The proteome of Saccharomyces cerevisiae mitochondria.</title>
        <authorList>
            <person name="Sickmann A."/>
            <person name="Reinders J."/>
            <person name="Wagner Y."/>
            <person name="Joppich C."/>
            <person name="Zahedi R.P."/>
            <person name="Meyer H.E."/>
            <person name="Schoenfisch B."/>
            <person name="Perschil I."/>
            <person name="Chacinska A."/>
            <person name="Guiard B."/>
            <person name="Rehling P."/>
            <person name="Pfanner N."/>
            <person name="Meisinger C."/>
        </authorList>
    </citation>
    <scope>SUBCELLULAR LOCATION [LARGE SCALE ANALYSIS]</scope>
    <source>
        <strain>ATCC 76625 / YPH499</strain>
    </source>
</reference>
<reference key="5">
    <citation type="journal article" date="2007" name="J. Proteome Res.">
        <title>Large-scale phosphorylation analysis of alpha-factor-arrested Saccharomyces cerevisiae.</title>
        <authorList>
            <person name="Li X."/>
            <person name="Gerber S.A."/>
            <person name="Rudner A.D."/>
            <person name="Beausoleil S.A."/>
            <person name="Haas W."/>
            <person name="Villen J."/>
            <person name="Elias J.E."/>
            <person name="Gygi S.P."/>
        </authorList>
    </citation>
    <scope>IDENTIFICATION BY MASS SPECTROMETRY [LARGE SCALE ANALYSIS]</scope>
    <source>
        <strain>ADR376</strain>
    </source>
</reference>
<reference key="6">
    <citation type="journal article" date="2008" name="Mol. Cell. Proteomics">
        <title>A multidimensional chromatography technology for in-depth phosphoproteome analysis.</title>
        <authorList>
            <person name="Albuquerque C.P."/>
            <person name="Smolka M.B."/>
            <person name="Payne S.H."/>
            <person name="Bafna V."/>
            <person name="Eng J."/>
            <person name="Zhou H."/>
        </authorList>
    </citation>
    <scope>IDENTIFICATION BY MASS SPECTROMETRY [LARGE SCALE ANALYSIS]</scope>
</reference>
<reference key="7">
    <citation type="journal article" date="2009" name="Science">
        <title>Global analysis of Cdk1 substrate phosphorylation sites provides insights into evolution.</title>
        <authorList>
            <person name="Holt L.J."/>
            <person name="Tuch B.B."/>
            <person name="Villen J."/>
            <person name="Johnson A.D."/>
            <person name="Gygi S.P."/>
            <person name="Morgan D.O."/>
        </authorList>
    </citation>
    <scope>IDENTIFICATION BY MASS SPECTROMETRY [LARGE SCALE ANALYSIS]</scope>
</reference>
<reference key="8">
    <citation type="journal article" date="2022" name="J. Cell Biol.">
        <title>Vps13-like proteins provide phosphatidylethanolamine for GPI anchor synthesis in the ER.</title>
        <authorList>
            <person name="Toulmay A."/>
            <person name="Whittle F.B."/>
            <person name="Yang J."/>
            <person name="Bai X."/>
            <person name="Diarra J."/>
            <person name="Banerjee S."/>
            <person name="Levine T.P."/>
            <person name="Golden A."/>
            <person name="Prinz W.A."/>
        </authorList>
    </citation>
    <scope>FUNCTION</scope>
    <scope>SUBCELLULAR LOCATION</scope>
</reference>
<reference key="9">
    <citation type="journal article" date="2022" name="J. Cell Sci.">
        <title>The Hob proteins are novel and conserved lipid-binding proteins at ER-PM contact sites.</title>
        <authorList>
            <person name="Neuman S.D."/>
            <person name="Jorgensen J.R."/>
            <person name="Cavanagh A.T."/>
            <person name="Smyth J.T."/>
            <person name="Selegue J.E."/>
            <person name="Emr S.D."/>
            <person name="Bashirullah A."/>
        </authorList>
    </citation>
    <scope>FUNCTION</scope>
    <scope>SUBCELLULAR LOCATION</scope>
</reference>
<reference key="10">
    <citation type="journal article" date="2022" name="Trends Cell Biol.">
        <title>A novel superfamily of bridge-like lipid transfer proteins.</title>
        <authorList>
            <person name="Neuman S.D."/>
            <person name="Levine T.P."/>
            <person name="Bashirullah A."/>
        </authorList>
    </citation>
    <scope>REVIEW OF FUNCTION</scope>
</reference>
<name>FMP27_YEAST</name>
<accession>Q06179</accession>
<accession>D6VZ88</accession>
<feature type="signal peptide" evidence="1">
    <location>
        <begin position="1"/>
        <end position="28"/>
    </location>
</feature>
<feature type="chain" id="PRO_0000247777" description="Protein FMP27, mitochondrial" evidence="1">
    <location>
        <begin position="29"/>
        <end position="2628"/>
    </location>
</feature>
<feature type="repeat" description="LRR 1" evidence="1">
    <location>
        <begin position="160"/>
        <end position="182"/>
    </location>
</feature>
<feature type="repeat" description="LRR 2" evidence="1">
    <location>
        <begin position="213"/>
        <end position="236"/>
    </location>
</feature>
<feature type="repeat" description="LRR 3" evidence="1">
    <location>
        <begin position="271"/>
        <end position="296"/>
    </location>
</feature>
<feature type="repeat" description="LRR 4" evidence="1">
    <location>
        <begin position="306"/>
        <end position="333"/>
    </location>
</feature>
<feature type="repeat" description="LRR 5" evidence="1">
    <location>
        <begin position="571"/>
        <end position="596"/>
    </location>
</feature>
<feature type="repeat" description="LRR 6" evidence="1">
    <location>
        <begin position="835"/>
        <end position="857"/>
    </location>
</feature>
<feature type="repeat" description="LRR 7" evidence="1">
    <location>
        <begin position="1944"/>
        <end position="1967"/>
    </location>
</feature>
<feature type="repeat" description="LRR 8" evidence="1">
    <location>
        <begin position="2101"/>
        <end position="2125"/>
    </location>
</feature>
<feature type="repeat" description="LRR 9" evidence="1">
    <location>
        <begin position="2303"/>
        <end position="2327"/>
    </location>
</feature>
<feature type="region of interest" description="Transmembrane domain" evidence="4">
    <location>
        <begin position="29"/>
        <end position="192"/>
    </location>
</feature>
<evidence type="ECO:0000255" key="1"/>
<evidence type="ECO:0000269" key="2">
    <source>
    </source>
</evidence>
<evidence type="ECO:0000269" key="3">
    <source>
    </source>
</evidence>
<evidence type="ECO:0000269" key="4">
    <source>
    </source>
</evidence>
<evidence type="ECO:0000269" key="5">
    <source>
    </source>
</evidence>
<evidence type="ECO:0000303" key="6">
    <source>
    </source>
</evidence>
<evidence type="ECO:0000305" key="7">
    <source>
    </source>
</evidence>
<evidence type="ECO:0000305" key="8">
    <source>
    </source>
</evidence>
<evidence type="ECO:0000305" key="9">
    <source>
    </source>
</evidence>
<evidence type="ECO:0000312" key="10">
    <source>
        <dbReference type="SGD" id="S000004446"/>
    </source>
</evidence>
<protein>
    <recommendedName>
        <fullName>Protein FMP27, mitochondrial</fullName>
    </recommendedName>
    <alternativeName>
        <fullName evidence="6">Bridge-like lipid transfer protein family member 2A</fullName>
        <shortName>BLTP2A</shortName>
    </alternativeName>
    <alternativeName>
        <fullName>Found in mitochondrial proteome protein 27</fullName>
    </alternativeName>
    <alternativeName>
        <fullName>Protein hobbit 1</fullName>
        <shortName>HOB1</shortName>
    </alternativeName>
</protein>
<dbReference type="EMBL" id="U22383">
    <property type="protein sequence ID" value="AAB64718.1"/>
    <property type="molecule type" value="Genomic_DNA"/>
</dbReference>
<dbReference type="EMBL" id="BK006945">
    <property type="protein sequence ID" value="DAA09754.1"/>
    <property type="molecule type" value="Genomic_DNA"/>
</dbReference>
<dbReference type="PIR" id="S59413">
    <property type="entry name" value="S59413"/>
</dbReference>
<dbReference type="RefSeq" id="NP_013559.1">
    <property type="nucleotide sequence ID" value="NM_001182342.1"/>
</dbReference>
<dbReference type="SMR" id="Q06179"/>
<dbReference type="BioGRID" id="31712">
    <property type="interactions" value="72"/>
</dbReference>
<dbReference type="DIP" id="DIP-3005N"/>
<dbReference type="FunCoup" id="Q06179">
    <property type="interactions" value="566"/>
</dbReference>
<dbReference type="IntAct" id="Q06179">
    <property type="interactions" value="10"/>
</dbReference>
<dbReference type="MINT" id="Q06179"/>
<dbReference type="STRING" id="4932.YLR454W"/>
<dbReference type="iPTMnet" id="Q06179"/>
<dbReference type="PaxDb" id="4932-YLR454W"/>
<dbReference type="PeptideAtlas" id="Q06179"/>
<dbReference type="TopDownProteomics" id="Q06179"/>
<dbReference type="EnsemblFungi" id="YLR454W_mRNA">
    <property type="protein sequence ID" value="YLR454W"/>
    <property type="gene ID" value="YLR454W"/>
</dbReference>
<dbReference type="GeneID" id="851175"/>
<dbReference type="KEGG" id="sce:YLR454W"/>
<dbReference type="AGR" id="SGD:S000004446"/>
<dbReference type="SGD" id="S000004446">
    <property type="gene designation" value="FMP27"/>
</dbReference>
<dbReference type="VEuPathDB" id="FungiDB:YLR454W"/>
<dbReference type="eggNOG" id="KOG1910">
    <property type="taxonomic scope" value="Eukaryota"/>
</dbReference>
<dbReference type="GeneTree" id="ENSGT00600000084481"/>
<dbReference type="HOGENOM" id="CLU_000740_0_0_1"/>
<dbReference type="InParanoid" id="Q06179"/>
<dbReference type="OMA" id="PNYFAKP"/>
<dbReference type="OrthoDB" id="1562405at2759"/>
<dbReference type="BioCyc" id="YEAST:G3O-32507-MONOMER"/>
<dbReference type="BioGRID-ORCS" id="851175">
    <property type="hits" value="0 hits in 10 CRISPR screens"/>
</dbReference>
<dbReference type="PRO" id="PR:Q06179"/>
<dbReference type="Proteomes" id="UP000002311">
    <property type="component" value="Chromosome XII"/>
</dbReference>
<dbReference type="RNAct" id="Q06179">
    <property type="molecule type" value="protein"/>
</dbReference>
<dbReference type="GO" id="GO:0005789">
    <property type="term" value="C:endoplasmic reticulum membrane"/>
    <property type="evidence" value="ECO:0007669"/>
    <property type="project" value="UniProtKB-SubCell"/>
</dbReference>
<dbReference type="GO" id="GO:0140268">
    <property type="term" value="C:endoplasmic reticulum-plasma membrane contact site"/>
    <property type="evidence" value="ECO:0000314"/>
    <property type="project" value="UniProtKB"/>
</dbReference>
<dbReference type="GO" id="GO:0044233">
    <property type="term" value="C:mitochondria-associated endoplasmic reticulum membrane contact site"/>
    <property type="evidence" value="ECO:0000314"/>
    <property type="project" value="SGD"/>
</dbReference>
<dbReference type="GO" id="GO:0031966">
    <property type="term" value="C:mitochondrial membrane"/>
    <property type="evidence" value="ECO:0007669"/>
    <property type="project" value="UniProtKB-SubCell"/>
</dbReference>
<dbReference type="GO" id="GO:0005739">
    <property type="term" value="C:mitochondrion"/>
    <property type="evidence" value="ECO:0007005"/>
    <property type="project" value="SGD"/>
</dbReference>
<dbReference type="GO" id="GO:0005886">
    <property type="term" value="C:plasma membrane"/>
    <property type="evidence" value="ECO:0007669"/>
    <property type="project" value="UniProtKB-SubCell"/>
</dbReference>
<dbReference type="InterPro" id="IPR019441">
    <property type="entry name" value="FMP27/BLTP2/Hobbit_GFWDK_RBG"/>
</dbReference>
<dbReference type="InterPro" id="IPR019415">
    <property type="entry name" value="FMP27_SW_RBG"/>
</dbReference>
<dbReference type="InterPro" id="IPR019449">
    <property type="entry name" value="FMP27_WPPW_RBG"/>
</dbReference>
<dbReference type="InterPro" id="IPR045167">
    <property type="entry name" value="Hobbit"/>
</dbReference>
<dbReference type="PANTHER" id="PTHR15678">
    <property type="entry name" value="ANTIGEN MLAA-22-RELATED"/>
    <property type="match status" value="1"/>
</dbReference>
<dbReference type="PANTHER" id="PTHR15678:SF15">
    <property type="entry name" value="PROTEIN FMP27, MITOCHONDRIAL"/>
    <property type="match status" value="1"/>
</dbReference>
<dbReference type="Pfam" id="PF10344">
    <property type="entry name" value="Hobbit"/>
    <property type="match status" value="1"/>
</dbReference>
<dbReference type="SMART" id="SM01214">
    <property type="entry name" value="Fmp27_GFWDK"/>
    <property type="match status" value="1"/>
</dbReference>
<dbReference type="SMART" id="SM01215">
    <property type="entry name" value="Fmp27_SW"/>
    <property type="match status" value="1"/>
</dbReference>
<dbReference type="SMART" id="SM01216">
    <property type="entry name" value="Fmp27_WPPW"/>
    <property type="match status" value="1"/>
</dbReference>
<organism>
    <name type="scientific">Saccharomyces cerevisiae (strain ATCC 204508 / S288c)</name>
    <name type="common">Baker's yeast</name>
    <dbReference type="NCBI Taxonomy" id="559292"/>
    <lineage>
        <taxon>Eukaryota</taxon>
        <taxon>Fungi</taxon>
        <taxon>Dikarya</taxon>
        <taxon>Ascomycota</taxon>
        <taxon>Saccharomycotina</taxon>
        <taxon>Saccharomycetes</taxon>
        <taxon>Saccharomycetales</taxon>
        <taxon>Saccharomycetaceae</taxon>
        <taxon>Saccharomyces</taxon>
    </lineage>
</organism>
<comment type="function">
    <text evidence="7 8 9">Tube-forming lipid transport protein which binds to phosphatidylinositols and affects phosphatidylinositol-4,5-bisphosphate (PtdIns-4,5-P2) distribution.</text>
</comment>
<comment type="subcellular location">
    <subcellularLocation>
        <location evidence="4 5">Cell membrane</location>
    </subcellularLocation>
    <subcellularLocation>
        <location evidence="4 5">Endoplasmic reticulum membrane</location>
    </subcellularLocation>
    <subcellularLocation>
        <location evidence="3 5">Mitochondrion membrane</location>
    </subcellularLocation>
    <text evidence="5">Localizes to endoplasmic reticulum-cell membrane and some endoplasmic reticulum-mitochondria contact sites.</text>
</comment>
<comment type="miscellaneous">
    <text evidence="2">Present with 1360 molecules/cell in log phase SD medium.</text>
</comment>